<protein>
    <recommendedName>
        <fullName>C-C chemokine receptor type 5</fullName>
        <shortName>C-C CKR-5</shortName>
        <shortName>CC-CKR-5</shortName>
        <shortName>CCR-5</shortName>
        <shortName>CCR5</shortName>
    </recommendedName>
    <cdAntigenName>CD195</cdAntigenName>
</protein>
<name>CCR5_COLPO</name>
<evidence type="ECO:0000250" key="1">
    <source>
        <dbReference type="UniProtKB" id="P51681"/>
    </source>
</evidence>
<evidence type="ECO:0000250" key="2">
    <source>
        <dbReference type="UniProtKB" id="Q9XT76"/>
    </source>
</evidence>
<evidence type="ECO:0000255" key="3"/>
<evidence type="ECO:0000255" key="4">
    <source>
        <dbReference type="PROSITE-ProRule" id="PRU00521"/>
    </source>
</evidence>
<sequence length="352" mass="40578">MDYQVSSPTYDIDYYTSEPCQKVNVKQIAARLLPPLYSLVFIFGFVGNILVVLILINCKRLKSMTDIYLLNLAISDLFFLLTVPFWAHYAAAQWDFGNTMCQLLTGLYFIGFFSGIFFIILLTIDRYLAIVHAVFALKARTVTFGVVTSVITWVVAVFASLPGIIFTRSQREGLHYTCSSHFPYSQYQFWKNFQTLKIVILGLVLPLLVMVICYSGILKTLLRCRNEKKRHRAVRLIFTIMIVYFLFWAPYNIVLLLNTFQEFFGLNNCSSSNRLDQAMQVTETLGMTHCCINPIIYAFVGEKFRNYLLVFFQKHIAKRFCKCCRIFQQEAPERASSVYTRSTGEQEISVGL</sequence>
<keyword id="KW-1003">Cell membrane</keyword>
<keyword id="KW-1015">Disulfide bond</keyword>
<keyword id="KW-0297">G-protein coupled receptor</keyword>
<keyword id="KW-0325">Glycoprotein</keyword>
<keyword id="KW-0449">Lipoprotein</keyword>
<keyword id="KW-0472">Membrane</keyword>
<keyword id="KW-0564">Palmitate</keyword>
<keyword id="KW-0597">Phosphoprotein</keyword>
<keyword id="KW-0675">Receptor</keyword>
<keyword id="KW-0765">Sulfation</keyword>
<keyword id="KW-0807">Transducer</keyword>
<keyword id="KW-0812">Transmembrane</keyword>
<keyword id="KW-1133">Transmembrane helix</keyword>
<feature type="chain" id="PRO_0000069254" description="C-C chemokine receptor type 5">
    <location>
        <begin position="1"/>
        <end position="352"/>
    </location>
</feature>
<feature type="topological domain" description="Extracellular" evidence="3">
    <location>
        <begin position="1"/>
        <end position="30"/>
    </location>
</feature>
<feature type="transmembrane region" description="Helical; Name=1" evidence="3">
    <location>
        <begin position="31"/>
        <end position="58"/>
    </location>
</feature>
<feature type="topological domain" description="Cytoplasmic" evidence="3">
    <location>
        <begin position="59"/>
        <end position="68"/>
    </location>
</feature>
<feature type="transmembrane region" description="Helical; Name=2" evidence="3">
    <location>
        <begin position="69"/>
        <end position="89"/>
    </location>
</feature>
<feature type="topological domain" description="Extracellular" evidence="3">
    <location>
        <begin position="90"/>
        <end position="102"/>
    </location>
</feature>
<feature type="transmembrane region" description="Helical; Name=3" evidence="3">
    <location>
        <begin position="103"/>
        <end position="124"/>
    </location>
</feature>
<feature type="topological domain" description="Cytoplasmic" evidence="3">
    <location>
        <begin position="125"/>
        <end position="141"/>
    </location>
</feature>
<feature type="transmembrane region" description="Helical; Name=4" evidence="3">
    <location>
        <begin position="142"/>
        <end position="166"/>
    </location>
</feature>
<feature type="topological domain" description="Extracellular" evidence="3">
    <location>
        <begin position="167"/>
        <end position="198"/>
    </location>
</feature>
<feature type="transmembrane region" description="Helical; Name=5" evidence="3">
    <location>
        <begin position="199"/>
        <end position="218"/>
    </location>
</feature>
<feature type="topological domain" description="Cytoplasmic" evidence="3">
    <location>
        <begin position="219"/>
        <end position="235"/>
    </location>
</feature>
<feature type="transmembrane region" description="Helical; Name=6" evidence="3">
    <location>
        <begin position="236"/>
        <end position="260"/>
    </location>
</feature>
<feature type="topological domain" description="Extracellular" evidence="3">
    <location>
        <begin position="261"/>
        <end position="277"/>
    </location>
</feature>
<feature type="transmembrane region" description="Helical; Name=7" evidence="3">
    <location>
        <begin position="278"/>
        <end position="301"/>
    </location>
</feature>
<feature type="topological domain" description="Cytoplasmic" evidence="3">
    <location>
        <begin position="302"/>
        <end position="352"/>
    </location>
</feature>
<feature type="modified residue" description="Sulfotyrosine" evidence="1">
    <location>
        <position position="3"/>
    </location>
</feature>
<feature type="modified residue" description="Sulfotyrosine" evidence="3">
    <location>
        <position position="10"/>
    </location>
</feature>
<feature type="modified residue" description="Sulfotyrosine" evidence="3">
    <location>
        <position position="14"/>
    </location>
</feature>
<feature type="modified residue" description="Sulfotyrosine" evidence="3">
    <location>
        <position position="15"/>
    </location>
</feature>
<feature type="modified residue" description="Phosphoserine; by BARK1" evidence="1">
    <location>
        <position position="336"/>
    </location>
</feature>
<feature type="modified residue" description="Phosphoserine; by BARK1" evidence="1">
    <location>
        <position position="337"/>
    </location>
</feature>
<feature type="modified residue" description="Phosphoserine; by BARK1" evidence="1">
    <location>
        <position position="342"/>
    </location>
</feature>
<feature type="modified residue" description="Phosphoserine; by BARK1" evidence="1">
    <location>
        <position position="349"/>
    </location>
</feature>
<feature type="lipid moiety-binding region" description="S-palmitoyl cysteine" evidence="1">
    <location>
        <position position="321"/>
    </location>
</feature>
<feature type="lipid moiety-binding region" description="S-palmitoyl cysteine" evidence="1">
    <location>
        <position position="323"/>
    </location>
</feature>
<feature type="lipid moiety-binding region" description="S-palmitoyl cysteine" evidence="1">
    <location>
        <position position="324"/>
    </location>
</feature>
<feature type="glycosylation site" description="O-linked (GalNAc...) serine" evidence="1">
    <location>
        <position position="6"/>
    </location>
</feature>
<feature type="glycosylation site" description="O-linked (GalNAc...) serine" evidence="1">
    <location>
        <position position="7"/>
    </location>
</feature>
<feature type="disulfide bond" evidence="1">
    <location>
        <begin position="20"/>
        <end position="269"/>
    </location>
</feature>
<feature type="disulfide bond" evidence="4">
    <location>
        <begin position="101"/>
        <end position="178"/>
    </location>
</feature>
<reference key="1">
    <citation type="journal article" date="1999" name="Mol. Biol. Evol.">
        <title>Sequence evolution of the CCR5 chemokine receptor gene in primates.</title>
        <authorList>
            <person name="Zhang Y.-W."/>
            <person name="Ryder O.A."/>
            <person name="Zhang Y.-P."/>
        </authorList>
    </citation>
    <scope>NUCLEOTIDE SEQUENCE [GENOMIC DNA]</scope>
</reference>
<dbReference type="EMBL" id="AF177881">
    <property type="protein sequence ID" value="AAK43364.1"/>
    <property type="molecule type" value="Genomic_DNA"/>
</dbReference>
<dbReference type="SMR" id="Q95NC8"/>
<dbReference type="GlyCosmos" id="Q95NC8">
    <property type="glycosylation" value="2 sites, No reported glycans"/>
</dbReference>
<dbReference type="GO" id="GO:0005737">
    <property type="term" value="C:cytoplasm"/>
    <property type="evidence" value="ECO:0007669"/>
    <property type="project" value="TreeGrafter"/>
</dbReference>
<dbReference type="GO" id="GO:0009897">
    <property type="term" value="C:external side of plasma membrane"/>
    <property type="evidence" value="ECO:0000250"/>
    <property type="project" value="UniProtKB"/>
</dbReference>
<dbReference type="GO" id="GO:0016493">
    <property type="term" value="F:C-C chemokine receptor activity"/>
    <property type="evidence" value="ECO:0000250"/>
    <property type="project" value="UniProtKB"/>
</dbReference>
<dbReference type="GO" id="GO:0071791">
    <property type="term" value="F:chemokine (C-C motif) ligand 5 binding"/>
    <property type="evidence" value="ECO:0007669"/>
    <property type="project" value="TreeGrafter"/>
</dbReference>
<dbReference type="GO" id="GO:0019722">
    <property type="term" value="P:calcium-mediated signaling"/>
    <property type="evidence" value="ECO:0007669"/>
    <property type="project" value="TreeGrafter"/>
</dbReference>
<dbReference type="GO" id="GO:0060326">
    <property type="term" value="P:cell chemotaxis"/>
    <property type="evidence" value="ECO:0007669"/>
    <property type="project" value="TreeGrafter"/>
</dbReference>
<dbReference type="GO" id="GO:0006955">
    <property type="term" value="P:immune response"/>
    <property type="evidence" value="ECO:0007669"/>
    <property type="project" value="InterPro"/>
</dbReference>
<dbReference type="GO" id="GO:0006954">
    <property type="term" value="P:inflammatory response"/>
    <property type="evidence" value="ECO:0007669"/>
    <property type="project" value="InterPro"/>
</dbReference>
<dbReference type="GO" id="GO:0007204">
    <property type="term" value="P:positive regulation of cytosolic calcium ion concentration"/>
    <property type="evidence" value="ECO:0007669"/>
    <property type="project" value="TreeGrafter"/>
</dbReference>
<dbReference type="CDD" id="cd15184">
    <property type="entry name" value="7tmA_CCR5_CCR2"/>
    <property type="match status" value="1"/>
</dbReference>
<dbReference type="FunFam" id="1.20.1070.10:FF:000026">
    <property type="entry name" value="C-C chemokine receptor type 5"/>
    <property type="match status" value="1"/>
</dbReference>
<dbReference type="Gene3D" id="1.20.1070.10">
    <property type="entry name" value="Rhodopsin 7-helix transmembrane proteins"/>
    <property type="match status" value="1"/>
</dbReference>
<dbReference type="InterPro" id="IPR050119">
    <property type="entry name" value="CCR1-9-like"/>
</dbReference>
<dbReference type="InterPro" id="IPR002240">
    <property type="entry name" value="Chemokine_CCR5"/>
</dbReference>
<dbReference type="InterPro" id="IPR000355">
    <property type="entry name" value="Chemokine_rcpt"/>
</dbReference>
<dbReference type="InterPro" id="IPR000276">
    <property type="entry name" value="GPCR_Rhodpsn"/>
</dbReference>
<dbReference type="InterPro" id="IPR017452">
    <property type="entry name" value="GPCR_Rhodpsn_7TM"/>
</dbReference>
<dbReference type="PANTHER" id="PTHR10489:SF686">
    <property type="entry name" value="C-C CHEMOKINE RECEPTOR TYPE 5"/>
    <property type="match status" value="1"/>
</dbReference>
<dbReference type="PANTHER" id="PTHR10489">
    <property type="entry name" value="CELL ADHESION MOLECULE"/>
    <property type="match status" value="1"/>
</dbReference>
<dbReference type="Pfam" id="PF00001">
    <property type="entry name" value="7tm_1"/>
    <property type="match status" value="1"/>
</dbReference>
<dbReference type="PRINTS" id="PR00657">
    <property type="entry name" value="CCCHEMOKINER"/>
</dbReference>
<dbReference type="PRINTS" id="PR01110">
    <property type="entry name" value="CHEMOKINER5"/>
</dbReference>
<dbReference type="PRINTS" id="PR00237">
    <property type="entry name" value="GPCRRHODOPSN"/>
</dbReference>
<dbReference type="SUPFAM" id="SSF81321">
    <property type="entry name" value="Family A G protein-coupled receptor-like"/>
    <property type="match status" value="1"/>
</dbReference>
<dbReference type="PROSITE" id="PS00237">
    <property type="entry name" value="G_PROTEIN_RECEP_F1_1"/>
    <property type="match status" value="1"/>
</dbReference>
<dbReference type="PROSITE" id="PS50262">
    <property type="entry name" value="G_PROTEIN_RECEP_F1_2"/>
    <property type="match status" value="1"/>
</dbReference>
<proteinExistence type="inferred from homology"/>
<comment type="function">
    <text evidence="1">Receptor for a number of inflammatory CC-chemokines including CCL3/MIP-1-alpha, CCL4/MIP-1-beta and RANTES and subsequently transduces a signal by increasing the intracellular calcium ion level. May play a role in the control of granulocytic lineage proliferation or differentiation. Participates in T-lymphocyte migration to the infection site by acting as a chemotactic receptor.</text>
</comment>
<comment type="subunit">
    <text evidence="1">Interacts with PRAF2. Efficient ligand binding to CCL3/MIP-1alpha and CCL4/MIP-1beta requires sulfation, O-glycosylation and sialic acid modifications. Glycosylation on Ser-6 is required for efficient binding of CCL4. Interacts with GRK2. Interacts with ARRB1 and ARRB2. Interacts with CNIH4. Interacts with S100A4; this interaction stimulates T-lymphocyte chemotaxis.</text>
</comment>
<comment type="subcellular location">
    <subcellularLocation>
        <location evidence="2">Cell membrane</location>
        <topology evidence="2">Multi-pass membrane protein</topology>
    </subcellularLocation>
</comment>
<comment type="PTM">
    <text evidence="1">Sulfated on at least 2 of the N-terminal tyrosines. Sulfation is required for efficient binding of the chemokines, CCL3 and CCL4 (By similarity).</text>
</comment>
<comment type="PTM">
    <text evidence="1">Palmitoylation in the C-terminal is important for cell surface expression.</text>
</comment>
<comment type="PTM">
    <text evidence="1">Phosphorylation on serine residues in the C-terminal is stimulated by binding CC chemokines especially by APO-RANTES.</text>
</comment>
<comment type="PTM">
    <text evidence="1">O-glycosylated, but not N-glycosylated. Ser-6 appears to be the major site even if Ser-7 may be also O-glycosylated. Also sialylated glycans present which contribute to chemokine binding. Thr-16 and Ser-17 may also be glycosylated and, if so, with small moieties such as a T-antigen.</text>
</comment>
<comment type="similarity">
    <text evidence="4">Belongs to the G-protein coupled receptor 1 family.</text>
</comment>
<gene>
    <name type="primary">CCR5</name>
    <name type="synonym">CMKBR5</name>
</gene>
<accession>Q95NC8</accession>
<organism>
    <name type="scientific">Colobus polykomos</name>
    <name type="common">Western black-and-white colobus monkey</name>
    <dbReference type="NCBI Taxonomy" id="9572"/>
    <lineage>
        <taxon>Eukaryota</taxon>
        <taxon>Metazoa</taxon>
        <taxon>Chordata</taxon>
        <taxon>Craniata</taxon>
        <taxon>Vertebrata</taxon>
        <taxon>Euteleostomi</taxon>
        <taxon>Mammalia</taxon>
        <taxon>Eutheria</taxon>
        <taxon>Euarchontoglires</taxon>
        <taxon>Primates</taxon>
        <taxon>Haplorrhini</taxon>
        <taxon>Catarrhini</taxon>
        <taxon>Cercopithecidae</taxon>
        <taxon>Colobinae</taxon>
        <taxon>Colobus</taxon>
    </lineage>
</organism>